<dbReference type="EC" id="3.1.3.11" evidence="1"/>
<dbReference type="EMBL" id="CP000159">
    <property type="protein sequence ID" value="ABC44261.1"/>
    <property type="status" value="ALT_INIT"/>
    <property type="molecule type" value="Genomic_DNA"/>
</dbReference>
<dbReference type="RefSeq" id="WP_193345373.1">
    <property type="nucleotide sequence ID" value="NC_007677.1"/>
</dbReference>
<dbReference type="RefSeq" id="YP_445968.1">
    <property type="nucleotide sequence ID" value="NC_007677.1"/>
</dbReference>
<dbReference type="SMR" id="Q2S1G3"/>
<dbReference type="STRING" id="309807.SRU_1856"/>
<dbReference type="EnsemblBacteria" id="ABC44261">
    <property type="protein sequence ID" value="ABC44261"/>
    <property type="gene ID" value="SRU_1856"/>
</dbReference>
<dbReference type="KEGG" id="sru:SRU_1856"/>
<dbReference type="PATRIC" id="fig|309807.25.peg.1923"/>
<dbReference type="eggNOG" id="COG0158">
    <property type="taxonomic scope" value="Bacteria"/>
</dbReference>
<dbReference type="HOGENOM" id="CLU_039977_2_2_10"/>
<dbReference type="OrthoDB" id="9806756at2"/>
<dbReference type="UniPathway" id="UPA00138"/>
<dbReference type="Proteomes" id="UP000008674">
    <property type="component" value="Chromosome"/>
</dbReference>
<dbReference type="GO" id="GO:0005829">
    <property type="term" value="C:cytosol"/>
    <property type="evidence" value="ECO:0007669"/>
    <property type="project" value="TreeGrafter"/>
</dbReference>
<dbReference type="GO" id="GO:0042132">
    <property type="term" value="F:fructose 1,6-bisphosphate 1-phosphatase activity"/>
    <property type="evidence" value="ECO:0007669"/>
    <property type="project" value="UniProtKB-UniRule"/>
</dbReference>
<dbReference type="GO" id="GO:0000287">
    <property type="term" value="F:magnesium ion binding"/>
    <property type="evidence" value="ECO:0007669"/>
    <property type="project" value="UniProtKB-UniRule"/>
</dbReference>
<dbReference type="GO" id="GO:0030388">
    <property type="term" value="P:fructose 1,6-bisphosphate metabolic process"/>
    <property type="evidence" value="ECO:0007669"/>
    <property type="project" value="TreeGrafter"/>
</dbReference>
<dbReference type="GO" id="GO:0006002">
    <property type="term" value="P:fructose 6-phosphate metabolic process"/>
    <property type="evidence" value="ECO:0007669"/>
    <property type="project" value="TreeGrafter"/>
</dbReference>
<dbReference type="GO" id="GO:0006000">
    <property type="term" value="P:fructose metabolic process"/>
    <property type="evidence" value="ECO:0007669"/>
    <property type="project" value="TreeGrafter"/>
</dbReference>
<dbReference type="GO" id="GO:0006094">
    <property type="term" value="P:gluconeogenesis"/>
    <property type="evidence" value="ECO:0007669"/>
    <property type="project" value="UniProtKB-UniRule"/>
</dbReference>
<dbReference type="GO" id="GO:0005986">
    <property type="term" value="P:sucrose biosynthetic process"/>
    <property type="evidence" value="ECO:0007669"/>
    <property type="project" value="TreeGrafter"/>
</dbReference>
<dbReference type="CDD" id="cd00354">
    <property type="entry name" value="FBPase"/>
    <property type="match status" value="1"/>
</dbReference>
<dbReference type="FunFam" id="3.30.540.10:FF:000002">
    <property type="entry name" value="Fructose-1,6-bisphosphatase class 1"/>
    <property type="match status" value="1"/>
</dbReference>
<dbReference type="Gene3D" id="3.40.190.80">
    <property type="match status" value="1"/>
</dbReference>
<dbReference type="Gene3D" id="3.30.540.10">
    <property type="entry name" value="Fructose-1,6-Bisphosphatase, subunit A, domain 1"/>
    <property type="match status" value="1"/>
</dbReference>
<dbReference type="HAMAP" id="MF_01855">
    <property type="entry name" value="FBPase_class1"/>
    <property type="match status" value="1"/>
</dbReference>
<dbReference type="InterPro" id="IPR044015">
    <property type="entry name" value="FBPase_C_dom"/>
</dbReference>
<dbReference type="InterPro" id="IPR000146">
    <property type="entry name" value="FBPase_class-1"/>
</dbReference>
<dbReference type="InterPro" id="IPR033391">
    <property type="entry name" value="FBPase_N"/>
</dbReference>
<dbReference type="InterPro" id="IPR028343">
    <property type="entry name" value="FBPtase"/>
</dbReference>
<dbReference type="NCBIfam" id="NF006778">
    <property type="entry name" value="PRK09293.1-1"/>
    <property type="match status" value="1"/>
</dbReference>
<dbReference type="PANTHER" id="PTHR11556">
    <property type="entry name" value="FRUCTOSE-1,6-BISPHOSPHATASE-RELATED"/>
    <property type="match status" value="1"/>
</dbReference>
<dbReference type="PANTHER" id="PTHR11556:SF35">
    <property type="entry name" value="SEDOHEPTULOSE-1,7-BISPHOSPHATASE, CHLOROPLASTIC"/>
    <property type="match status" value="1"/>
</dbReference>
<dbReference type="Pfam" id="PF00316">
    <property type="entry name" value="FBPase"/>
    <property type="match status" value="1"/>
</dbReference>
<dbReference type="Pfam" id="PF18913">
    <property type="entry name" value="FBPase_C"/>
    <property type="match status" value="1"/>
</dbReference>
<dbReference type="PIRSF" id="PIRSF500210">
    <property type="entry name" value="FBPtase"/>
    <property type="match status" value="1"/>
</dbReference>
<dbReference type="PIRSF" id="PIRSF000904">
    <property type="entry name" value="FBPtase_SBPase"/>
    <property type="match status" value="1"/>
</dbReference>
<dbReference type="PRINTS" id="PR00115">
    <property type="entry name" value="F16BPHPHTASE"/>
</dbReference>
<dbReference type="SUPFAM" id="SSF56655">
    <property type="entry name" value="Carbohydrate phosphatase"/>
    <property type="match status" value="1"/>
</dbReference>
<reference key="1">
    <citation type="journal article" date="2005" name="Proc. Natl. Acad. Sci. U.S.A.">
        <title>The genome of Salinibacter ruber: convergence and gene exchange among hyperhalophilic bacteria and archaea.</title>
        <authorList>
            <person name="Mongodin E.F."/>
            <person name="Nelson K.E."/>
            <person name="Daugherty S."/>
            <person name="DeBoy R.T."/>
            <person name="Wister J."/>
            <person name="Khouri H."/>
            <person name="Weidman J."/>
            <person name="Walsh D.A."/>
            <person name="Papke R.T."/>
            <person name="Sanchez Perez G."/>
            <person name="Sharma A.K."/>
            <person name="Nesbo C.L."/>
            <person name="MacLeod D."/>
            <person name="Bapteste E."/>
            <person name="Doolittle W.F."/>
            <person name="Charlebois R.L."/>
            <person name="Legault B."/>
            <person name="Rodriguez-Valera F."/>
        </authorList>
    </citation>
    <scope>NUCLEOTIDE SEQUENCE [LARGE SCALE GENOMIC DNA]</scope>
    <source>
        <strain>DSM 13855 / CECT 5946 / M31</strain>
    </source>
</reference>
<protein>
    <recommendedName>
        <fullName evidence="1">Fructose-1,6-bisphosphatase class 1 2</fullName>
        <shortName evidence="1">FBPase class 1 2</shortName>
        <ecNumber evidence="1">3.1.3.11</ecNumber>
    </recommendedName>
    <alternativeName>
        <fullName evidence="1">D-fructose-1,6-bisphosphate 1-phosphohydrolase class 1 2</fullName>
    </alternativeName>
</protein>
<name>F16A2_SALRD</name>
<keyword id="KW-0119">Carbohydrate metabolism</keyword>
<keyword id="KW-0963">Cytoplasm</keyword>
<keyword id="KW-0378">Hydrolase</keyword>
<keyword id="KW-0460">Magnesium</keyword>
<keyword id="KW-0479">Metal-binding</keyword>
<keyword id="KW-1185">Reference proteome</keyword>
<gene>
    <name evidence="1" type="primary">fbp2</name>
    <name type="ordered locus">SRU_1856</name>
</gene>
<feature type="chain" id="PRO_0000364683" description="Fructose-1,6-bisphosphatase class 1 2">
    <location>
        <begin position="1"/>
        <end position="361"/>
    </location>
</feature>
<feature type="binding site" evidence="1">
    <location>
        <position position="110"/>
    </location>
    <ligand>
        <name>Mg(2+)</name>
        <dbReference type="ChEBI" id="CHEBI:18420"/>
        <label>1</label>
    </ligand>
</feature>
<feature type="binding site" evidence="1">
    <location>
        <position position="134"/>
    </location>
    <ligand>
        <name>Mg(2+)</name>
        <dbReference type="ChEBI" id="CHEBI:18420"/>
        <label>1</label>
    </ligand>
</feature>
<feature type="binding site" evidence="1">
    <location>
        <position position="134"/>
    </location>
    <ligand>
        <name>Mg(2+)</name>
        <dbReference type="ChEBI" id="CHEBI:18420"/>
        <label>2</label>
    </ligand>
</feature>
<feature type="binding site" evidence="1">
    <location>
        <position position="136"/>
    </location>
    <ligand>
        <name>Mg(2+)</name>
        <dbReference type="ChEBI" id="CHEBI:18420"/>
        <label>1</label>
    </ligand>
</feature>
<feature type="binding site" evidence="1">
    <location>
        <begin position="137"/>
        <end position="140"/>
    </location>
    <ligand>
        <name>substrate</name>
    </ligand>
</feature>
<feature type="binding site" evidence="1">
    <location>
        <position position="137"/>
    </location>
    <ligand>
        <name>Mg(2+)</name>
        <dbReference type="ChEBI" id="CHEBI:18420"/>
        <label>2</label>
    </ligand>
</feature>
<feature type="binding site" evidence="1">
    <location>
        <position position="231"/>
    </location>
    <ligand>
        <name>substrate</name>
    </ligand>
</feature>
<feature type="binding site" evidence="1">
    <location>
        <position position="264"/>
    </location>
    <ligand>
        <name>substrate</name>
    </ligand>
</feature>
<feature type="binding site" evidence="1">
    <location>
        <position position="294"/>
    </location>
    <ligand>
        <name>substrate</name>
    </ligand>
</feature>
<feature type="binding site" evidence="1">
    <location>
        <position position="300"/>
    </location>
    <ligand>
        <name>Mg(2+)</name>
        <dbReference type="ChEBI" id="CHEBI:18420"/>
        <label>2</label>
    </ligand>
</feature>
<accession>Q2S1G3</accession>
<proteinExistence type="inferred from homology"/>
<comment type="catalytic activity">
    <reaction evidence="1">
        <text>beta-D-fructose 1,6-bisphosphate + H2O = beta-D-fructose 6-phosphate + phosphate</text>
        <dbReference type="Rhea" id="RHEA:11064"/>
        <dbReference type="ChEBI" id="CHEBI:15377"/>
        <dbReference type="ChEBI" id="CHEBI:32966"/>
        <dbReference type="ChEBI" id="CHEBI:43474"/>
        <dbReference type="ChEBI" id="CHEBI:57634"/>
        <dbReference type="EC" id="3.1.3.11"/>
    </reaction>
</comment>
<comment type="cofactor">
    <cofactor evidence="1">
        <name>Mg(2+)</name>
        <dbReference type="ChEBI" id="CHEBI:18420"/>
    </cofactor>
    <text evidence="1">Binds 2 magnesium ions per subunit.</text>
</comment>
<comment type="pathway">
    <text evidence="1">Carbohydrate biosynthesis; gluconeogenesis.</text>
</comment>
<comment type="subunit">
    <text evidence="1">Homotetramer.</text>
</comment>
<comment type="subcellular location">
    <subcellularLocation>
        <location evidence="1">Cytoplasm</location>
    </subcellularLocation>
</comment>
<comment type="similarity">
    <text evidence="1">Belongs to the FBPase class 1 family.</text>
</comment>
<comment type="sequence caution" evidence="2">
    <conflict type="erroneous initiation">
        <sequence resource="EMBL-CDS" id="ABC44261"/>
    </conflict>
</comment>
<sequence length="361" mass="39652">MTGSHRTSHAGDGAPEDDLGTFQTLEQFILDRQDSFPHSTGAFSRLLRDISLAAKIVNRDMRRAGLLDVYGSTGERNVQGEVQQKMDALAHREFVQALRRGGECCLIGSEEHAEAIPLSTVSKEGDGKYIVLLDPLDGSSNIDVNVSVGTIFSIYRLPDGYEEEEPDPAAALQPGTEQVAAGYVVYGSSTMLVYTTGNGVNGFTLDPSIGEFLLSHPDIQTPSRGRLSSINSGYYHSFEEGLRDYLDWLQQKDPETNRPAKTRYIGSFVSDFHRNLLKGGIYMYPATESSPAGKLRLMYEANPMGFIAEQAGGAASDGHRRILEKEPDKLHQRTPLFIGSEEMVRRAEAFLQGEPERALSA</sequence>
<organism>
    <name type="scientific">Salinibacter ruber (strain DSM 13855 / M31)</name>
    <dbReference type="NCBI Taxonomy" id="309807"/>
    <lineage>
        <taxon>Bacteria</taxon>
        <taxon>Pseudomonadati</taxon>
        <taxon>Rhodothermota</taxon>
        <taxon>Rhodothermia</taxon>
        <taxon>Rhodothermales</taxon>
        <taxon>Salinibacteraceae</taxon>
        <taxon>Salinibacter</taxon>
    </lineage>
</organism>
<evidence type="ECO:0000255" key="1">
    <source>
        <dbReference type="HAMAP-Rule" id="MF_01855"/>
    </source>
</evidence>
<evidence type="ECO:0000305" key="2"/>